<gene>
    <name type="ORF">DDB_G0268382</name>
</gene>
<evidence type="ECO:0000255" key="1"/>
<evidence type="ECO:0000305" key="2"/>
<proteinExistence type="predicted"/>
<name>Y2176_DICDI</name>
<comment type="subcellular location">
    <subcellularLocation>
        <location evidence="2">Membrane</location>
        <topology evidence="2">Single-pass membrane protein</topology>
    </subcellularLocation>
</comment>
<organism>
    <name type="scientific">Dictyostelium discoideum</name>
    <name type="common">Social amoeba</name>
    <dbReference type="NCBI Taxonomy" id="44689"/>
    <lineage>
        <taxon>Eukaryota</taxon>
        <taxon>Amoebozoa</taxon>
        <taxon>Evosea</taxon>
        <taxon>Eumycetozoa</taxon>
        <taxon>Dictyostelia</taxon>
        <taxon>Dictyosteliales</taxon>
        <taxon>Dictyosteliaceae</taxon>
        <taxon>Dictyostelium</taxon>
    </lineage>
</organism>
<protein>
    <recommendedName>
        <fullName>Putative uncharacterized protein DDB_G0268382</fullName>
    </recommendedName>
</protein>
<dbReference type="EMBL" id="AAFI02000003">
    <property type="protein sequence ID" value="EAL73644.1"/>
    <property type="molecule type" value="Genomic_DNA"/>
</dbReference>
<dbReference type="RefSeq" id="XP_647397.1">
    <property type="nucleotide sequence ID" value="XM_642305.1"/>
</dbReference>
<dbReference type="SMR" id="Q55FY6"/>
<dbReference type="GlyGen" id="Q55FY6">
    <property type="glycosylation" value="1 site"/>
</dbReference>
<dbReference type="PaxDb" id="44689-DDB0202176"/>
<dbReference type="EnsemblProtists" id="EAL73644">
    <property type="protein sequence ID" value="EAL73644"/>
    <property type="gene ID" value="DDB_G0268382"/>
</dbReference>
<dbReference type="GeneID" id="8616204"/>
<dbReference type="KEGG" id="ddi:DDB_G0268382"/>
<dbReference type="dictyBase" id="DDB_G0268382"/>
<dbReference type="VEuPathDB" id="AmoebaDB:DDB_G0268382"/>
<dbReference type="HOGENOM" id="CLU_1942022_0_0_1"/>
<dbReference type="InParanoid" id="Q55FY6"/>
<dbReference type="PRO" id="PR:Q55FY6"/>
<dbReference type="Proteomes" id="UP000002195">
    <property type="component" value="Chromosome 1"/>
</dbReference>
<dbReference type="GO" id="GO:0016020">
    <property type="term" value="C:membrane"/>
    <property type="evidence" value="ECO:0007669"/>
    <property type="project" value="UniProtKB-SubCell"/>
</dbReference>
<keyword id="KW-0325">Glycoprotein</keyword>
<keyword id="KW-0472">Membrane</keyword>
<keyword id="KW-1185">Reference proteome</keyword>
<keyword id="KW-0812">Transmembrane</keyword>
<keyword id="KW-1133">Transmembrane helix</keyword>
<reference key="1">
    <citation type="journal article" date="2005" name="Nature">
        <title>The genome of the social amoeba Dictyostelium discoideum.</title>
        <authorList>
            <person name="Eichinger L."/>
            <person name="Pachebat J.A."/>
            <person name="Gloeckner G."/>
            <person name="Rajandream M.A."/>
            <person name="Sucgang R."/>
            <person name="Berriman M."/>
            <person name="Song J."/>
            <person name="Olsen R."/>
            <person name="Szafranski K."/>
            <person name="Xu Q."/>
            <person name="Tunggal B."/>
            <person name="Kummerfeld S."/>
            <person name="Madera M."/>
            <person name="Konfortov B.A."/>
            <person name="Rivero F."/>
            <person name="Bankier A.T."/>
            <person name="Lehmann R."/>
            <person name="Hamlin N."/>
            <person name="Davies R."/>
            <person name="Gaudet P."/>
            <person name="Fey P."/>
            <person name="Pilcher K."/>
            <person name="Chen G."/>
            <person name="Saunders D."/>
            <person name="Sodergren E.J."/>
            <person name="Davis P."/>
            <person name="Kerhornou A."/>
            <person name="Nie X."/>
            <person name="Hall N."/>
            <person name="Anjard C."/>
            <person name="Hemphill L."/>
            <person name="Bason N."/>
            <person name="Farbrother P."/>
            <person name="Desany B."/>
            <person name="Just E."/>
            <person name="Morio T."/>
            <person name="Rost R."/>
            <person name="Churcher C.M."/>
            <person name="Cooper J."/>
            <person name="Haydock S."/>
            <person name="van Driessche N."/>
            <person name="Cronin A."/>
            <person name="Goodhead I."/>
            <person name="Muzny D.M."/>
            <person name="Mourier T."/>
            <person name="Pain A."/>
            <person name="Lu M."/>
            <person name="Harper D."/>
            <person name="Lindsay R."/>
            <person name="Hauser H."/>
            <person name="James K.D."/>
            <person name="Quiles M."/>
            <person name="Madan Babu M."/>
            <person name="Saito T."/>
            <person name="Buchrieser C."/>
            <person name="Wardroper A."/>
            <person name="Felder M."/>
            <person name="Thangavelu M."/>
            <person name="Johnson D."/>
            <person name="Knights A."/>
            <person name="Loulseged H."/>
            <person name="Mungall K.L."/>
            <person name="Oliver K."/>
            <person name="Price C."/>
            <person name="Quail M.A."/>
            <person name="Urushihara H."/>
            <person name="Hernandez J."/>
            <person name="Rabbinowitsch E."/>
            <person name="Steffen D."/>
            <person name="Sanders M."/>
            <person name="Ma J."/>
            <person name="Kohara Y."/>
            <person name="Sharp S."/>
            <person name="Simmonds M.N."/>
            <person name="Spiegler S."/>
            <person name="Tivey A."/>
            <person name="Sugano S."/>
            <person name="White B."/>
            <person name="Walker D."/>
            <person name="Woodward J.R."/>
            <person name="Winckler T."/>
            <person name="Tanaka Y."/>
            <person name="Shaulsky G."/>
            <person name="Schleicher M."/>
            <person name="Weinstock G.M."/>
            <person name="Rosenthal A."/>
            <person name="Cox E.C."/>
            <person name="Chisholm R.L."/>
            <person name="Gibbs R.A."/>
            <person name="Loomis W.F."/>
            <person name="Platzer M."/>
            <person name="Kay R.R."/>
            <person name="Williams J.G."/>
            <person name="Dear P.H."/>
            <person name="Noegel A.A."/>
            <person name="Barrell B.G."/>
            <person name="Kuspa A."/>
        </authorList>
    </citation>
    <scope>NUCLEOTIDE SEQUENCE [LARGE SCALE GENOMIC DNA]</scope>
    <source>
        <strain>AX4</strain>
    </source>
</reference>
<accession>Q55FY6</accession>
<sequence length="130" mass="15033">MLFIYLIVTFFTKMDSVSRIKAFFIMLLTLADQPLTYKIKISQCNDMIINVPYNECFPIYDDCVFGSVLIFQKSDSSKYQVNLYPNINCDENGIIPSKIPYNESGLKITDPLAFYLMFLIIITILLIMIL</sequence>
<feature type="chain" id="PRO_0000348096" description="Putative uncharacterized protein DDB_G0268382">
    <location>
        <begin position="1"/>
        <end position="130"/>
    </location>
</feature>
<feature type="transmembrane region" description="Helical" evidence="1">
    <location>
        <begin position="110"/>
        <end position="130"/>
    </location>
</feature>
<feature type="glycosylation site" description="N-linked (GlcNAc...) asparagine" evidence="1">
    <location>
        <position position="102"/>
    </location>
</feature>